<sequence>MASTKIDDKVSIPGPVTGTGNSRFLIVSHENGGIWDLVRFGVWGNKESGDKFLHYSAGGGLLEEHLVRSDDSGGGDDRGGEVPDHRWVIFVSIIVRKLIAIFGKPMEWTGYLVEFFLNLFSLNGNFLGLLYNILHGKVVMPHRGSETFISAIGHLDGRINLYKSETLTKEIGEPDFWQKIGIGHRDLMDLCMMASKLAYENEKVVRNVVNLHWKMHFVDFYNCWNDFEKEMSTQVFLLCDKPKDANLILVSFRGTEPFDADDWITDFDYSWYEIPKLGKVHMGFLEALGLGNRTNASTFHEQLFVNNLKFANLENVHATIPPSESSKSSTSFSDSDAHTGSDLSSDSERPTDTRKKKFRLEIPERTAYYVVRSKLKRLLKEHKNAKFVVTGHSLGGALAILFPAVLVLHEEVDVMERLLGIYTYGQPRVGNRQLGRFMEAHLEHPVPKYFRVVYCNDLVPRLPYDNKTFLFKHFGICQYYNSLYIEQNINEEPNPNYFGMRFLVPLYLNAGWELIRSFTMGYMYGSEYEECWESVMLRALGLFLPGISAHSPVDYVNSIRLGKARSTQMSSF</sequence>
<gene>
    <name evidence="6" type="primary">OBL1</name>
    <name evidence="9" type="ORF">LOC107788962</name>
</gene>
<reference key="1">
    <citation type="journal article" date="2014" name="Nat. Commun.">
        <title>The tobacco genome sequence and its comparison with those of tomato and potato.</title>
        <authorList>
            <person name="Sierro N."/>
            <person name="Battey J.N."/>
            <person name="Ouadi S."/>
            <person name="Bakaher N."/>
            <person name="Bovet L."/>
            <person name="Willig A."/>
            <person name="Goepfert S."/>
            <person name="Peitsch M.C."/>
            <person name="Ivanov N.V."/>
        </authorList>
    </citation>
    <scope>NUCLEOTIDE SEQUENCE [LARGE SCALE GENOMIC DNA]</scope>
    <source>
        <strain>cv. TN90</strain>
    </source>
</reference>
<reference key="2">
    <citation type="journal article" date="2018" name="New Phytol.">
        <title>Characterization of the enzymatic activity and physiological function of the lipid droplet-associated triacylglycerol lipase AtOBL1.</title>
        <authorList>
            <person name="Mueller A.O."/>
            <person name="Ischebeck T."/>
        </authorList>
    </citation>
    <scope>FUNCTION</scope>
    <scope>CATALYTIC ACTIVITY</scope>
    <scope>SUBCELLULAR LOCATION</scope>
    <scope>TISSUE SPECIFICITY</scope>
    <scope>MUTAGENESIS OF SER-393</scope>
</reference>
<protein>
    <recommendedName>
        <fullName evidence="7">Triacylglycerol lipase OBL1</fullName>
        <ecNumber evidence="5">3.1.1.-</ecNumber>
    </recommendedName>
    <alternativeName>
        <fullName evidence="6">Oil body lipase 1</fullName>
        <shortName evidence="6">NtOBL1</shortName>
    </alternativeName>
</protein>
<proteinExistence type="evidence at protein level"/>
<evidence type="ECO:0000250" key="1">
    <source>
        <dbReference type="UniProtKB" id="F4JFU8"/>
    </source>
</evidence>
<evidence type="ECO:0000250" key="2">
    <source>
        <dbReference type="UniProtKB" id="Q948R1"/>
    </source>
</evidence>
<evidence type="ECO:0000255" key="3"/>
<evidence type="ECO:0000256" key="4">
    <source>
        <dbReference type="SAM" id="MobiDB-lite"/>
    </source>
</evidence>
<evidence type="ECO:0000269" key="5">
    <source>
    </source>
</evidence>
<evidence type="ECO:0000303" key="6">
    <source>
    </source>
</evidence>
<evidence type="ECO:0000305" key="7"/>
<evidence type="ECO:0000305" key="8">
    <source>
    </source>
</evidence>
<evidence type="ECO:0000312" key="9">
    <source>
        <dbReference type="RefSeq" id="XP_016466196.1"/>
    </source>
</evidence>
<name>OBL1_TOBAC</name>
<accession>A0A1S3ZP85</accession>
<dbReference type="EC" id="3.1.1.-" evidence="5"/>
<dbReference type="RefSeq" id="NP_001412789.1">
    <property type="nucleotide sequence ID" value="NM_001425860.1"/>
</dbReference>
<dbReference type="RefSeq" id="XP_016466196.1">
    <property type="nucleotide sequence ID" value="XM_016610710.1"/>
</dbReference>
<dbReference type="RefSeq" id="XP_016466197.1">
    <property type="nucleotide sequence ID" value="XM_016610711.1"/>
</dbReference>
<dbReference type="SMR" id="A0A1S3ZP85"/>
<dbReference type="ESTHER" id="tabac-OBL1">
    <property type="family name" value="Triacylglycerol-lipase-OBL1-like"/>
</dbReference>
<dbReference type="PaxDb" id="4097-A0A1S3ZP85"/>
<dbReference type="GeneID" id="107788962"/>
<dbReference type="KEGG" id="nta:107788962"/>
<dbReference type="OMA" id="AILFMHK"/>
<dbReference type="OrthoDB" id="438440at2759"/>
<dbReference type="Proteomes" id="UP000084051">
    <property type="component" value="Unplaced"/>
</dbReference>
<dbReference type="GO" id="GO:0005811">
    <property type="term" value="C:lipid droplet"/>
    <property type="evidence" value="ECO:0007669"/>
    <property type="project" value="UniProtKB-SubCell"/>
</dbReference>
<dbReference type="GO" id="GO:0016020">
    <property type="term" value="C:membrane"/>
    <property type="evidence" value="ECO:0007669"/>
    <property type="project" value="UniProtKB-SubCell"/>
</dbReference>
<dbReference type="GO" id="GO:0004806">
    <property type="term" value="F:triacylglycerol lipase activity"/>
    <property type="evidence" value="ECO:0007669"/>
    <property type="project" value="InterPro"/>
</dbReference>
<dbReference type="GO" id="GO:0016042">
    <property type="term" value="P:lipid catabolic process"/>
    <property type="evidence" value="ECO:0007669"/>
    <property type="project" value="UniProtKB-KW"/>
</dbReference>
<dbReference type="CDD" id="cd00519">
    <property type="entry name" value="Lipase_3"/>
    <property type="match status" value="1"/>
</dbReference>
<dbReference type="Gene3D" id="3.40.50.1820">
    <property type="entry name" value="alpha/beta hydrolase"/>
    <property type="match status" value="1"/>
</dbReference>
<dbReference type="InterPro" id="IPR029058">
    <property type="entry name" value="AB_hydrolase_fold"/>
</dbReference>
<dbReference type="InterPro" id="IPR002921">
    <property type="entry name" value="Fungal_lipase-type"/>
</dbReference>
<dbReference type="InterPro" id="IPR044819">
    <property type="entry name" value="OBL-like"/>
</dbReference>
<dbReference type="PANTHER" id="PTHR46086">
    <property type="entry name" value="ALPHA/BETA-HYDROLASES SUPERFAMILY PROTEIN"/>
    <property type="match status" value="1"/>
</dbReference>
<dbReference type="PANTHER" id="PTHR46086:SF22">
    <property type="entry name" value="TRIACYLGLYCEROL LIPASE OBL1"/>
    <property type="match status" value="1"/>
</dbReference>
<dbReference type="Pfam" id="PF01764">
    <property type="entry name" value="Lipase_3"/>
    <property type="match status" value="1"/>
</dbReference>
<dbReference type="SUPFAM" id="SSF53474">
    <property type="entry name" value="alpha/beta-Hydrolases"/>
    <property type="match status" value="1"/>
</dbReference>
<comment type="function">
    <text evidence="5 8">Acid lipase that can hydrolyze a range of triacylglycerols without a clear preference for acyl-chains (PubMed:29178188). Can also cleave 1,2-diacylglycerol, 1,3-diacylglycerol and 1-monoacylglycerol, but not phosphatidylcholine, phosphatidylethanolamine, or sterol esters (PubMed:29178188). Required for pollen tube growth (PubMed:29178188). Triacylglycerol hydrolysis by OBL1 may provide acyl groups for the synthesis of membrane lipids in growing pollen tubes (Probable).</text>
</comment>
<comment type="catalytic activity">
    <reaction evidence="5">
        <text>1,2-di-(9Z-octadecenoyl)-glycerol + (9Z)-octadecenoate + H(+) = 1,2,3-tri-(9Z-octadecenoyl)-glycerol + H2O</text>
        <dbReference type="Rhea" id="RHEA:38379"/>
        <dbReference type="ChEBI" id="CHEBI:15377"/>
        <dbReference type="ChEBI" id="CHEBI:15378"/>
        <dbReference type="ChEBI" id="CHEBI:30823"/>
        <dbReference type="ChEBI" id="CHEBI:52323"/>
        <dbReference type="ChEBI" id="CHEBI:53753"/>
    </reaction>
    <physiologicalReaction direction="right-to-left" evidence="5">
        <dbReference type="Rhea" id="RHEA:38381"/>
    </physiologicalReaction>
</comment>
<comment type="catalytic activity">
    <reaction evidence="5">
        <text>1-(9Z-octadecenoyl)-glycerol + H2O = glycerol + (9Z)-octadecenoate + H(+)</text>
        <dbReference type="Rhea" id="RHEA:38487"/>
        <dbReference type="ChEBI" id="CHEBI:15377"/>
        <dbReference type="ChEBI" id="CHEBI:15378"/>
        <dbReference type="ChEBI" id="CHEBI:17754"/>
        <dbReference type="ChEBI" id="CHEBI:30823"/>
        <dbReference type="ChEBI" id="CHEBI:75342"/>
    </reaction>
    <physiologicalReaction direction="left-to-right" evidence="5">
        <dbReference type="Rhea" id="RHEA:38488"/>
    </physiologicalReaction>
</comment>
<comment type="subcellular location">
    <subcellularLocation>
        <location evidence="5">Lipid droplet</location>
    </subcellularLocation>
    <subcellularLocation>
        <location evidence="3">Membrane</location>
        <topology evidence="3">Single-pass membrane protein</topology>
    </subcellularLocation>
    <text evidence="8">Associates with the oil body membrane.</text>
</comment>
<comment type="tissue specificity">
    <text evidence="5">Expressed in pollen grains and pollen tubes.</text>
</comment>
<comment type="similarity">
    <text evidence="7">Belongs to the AB hydrolase superfamily. Lipase family.</text>
</comment>
<feature type="chain" id="PRO_0000450283" description="Triacylglycerol lipase OBL1">
    <location>
        <begin position="1"/>
        <end position="572"/>
    </location>
</feature>
<feature type="transmembrane region" description="Helical" evidence="3">
    <location>
        <begin position="110"/>
        <end position="130"/>
    </location>
</feature>
<feature type="region of interest" description="Disordered" evidence="4">
    <location>
        <begin position="320"/>
        <end position="356"/>
    </location>
</feature>
<feature type="short sequence motif" description="GXSXG" evidence="1">
    <location>
        <begin position="391"/>
        <end position="395"/>
    </location>
</feature>
<feature type="compositionally biased region" description="Low complexity" evidence="4">
    <location>
        <begin position="323"/>
        <end position="334"/>
    </location>
</feature>
<feature type="compositionally biased region" description="Basic and acidic residues" evidence="4">
    <location>
        <begin position="346"/>
        <end position="356"/>
    </location>
</feature>
<feature type="active site" description="Nucleophile" evidence="1">
    <location>
        <position position="393"/>
    </location>
</feature>
<feature type="active site" description="Charge relay system" evidence="2">
    <location>
        <position position="457"/>
    </location>
</feature>
<feature type="active site" description="Charge relay system" evidence="2">
    <location>
        <position position="550"/>
    </location>
</feature>
<feature type="mutagenesis site" description="Reduces pollen tube growth." evidence="5">
    <original>S</original>
    <variation>A</variation>
    <location>
        <position position="393"/>
    </location>
</feature>
<organism>
    <name type="scientific">Nicotiana tabacum</name>
    <name type="common">Common tobacco</name>
    <dbReference type="NCBI Taxonomy" id="4097"/>
    <lineage>
        <taxon>Eukaryota</taxon>
        <taxon>Viridiplantae</taxon>
        <taxon>Streptophyta</taxon>
        <taxon>Embryophyta</taxon>
        <taxon>Tracheophyta</taxon>
        <taxon>Spermatophyta</taxon>
        <taxon>Magnoliopsida</taxon>
        <taxon>eudicotyledons</taxon>
        <taxon>Gunneridae</taxon>
        <taxon>Pentapetalae</taxon>
        <taxon>asterids</taxon>
        <taxon>lamiids</taxon>
        <taxon>Solanales</taxon>
        <taxon>Solanaceae</taxon>
        <taxon>Nicotianoideae</taxon>
        <taxon>Nicotianeae</taxon>
        <taxon>Nicotiana</taxon>
    </lineage>
</organism>
<keyword id="KW-0378">Hydrolase</keyword>
<keyword id="KW-0442">Lipid degradation</keyword>
<keyword id="KW-0551">Lipid droplet</keyword>
<keyword id="KW-0443">Lipid metabolism</keyword>
<keyword id="KW-0472">Membrane</keyword>
<keyword id="KW-1185">Reference proteome</keyword>
<keyword id="KW-0812">Transmembrane</keyword>
<keyword id="KW-1133">Transmembrane helix</keyword>